<organism>
    <name type="scientific">Meyerozyma guilliermondii (strain ATCC 6260 / CBS 566 / DSM 6381 / JCM 1539 / NBRC 10279 / NRRL Y-324)</name>
    <name type="common">Yeast</name>
    <name type="synonym">Candida guilliermondii</name>
    <dbReference type="NCBI Taxonomy" id="294746"/>
    <lineage>
        <taxon>Eukaryota</taxon>
        <taxon>Fungi</taxon>
        <taxon>Dikarya</taxon>
        <taxon>Ascomycota</taxon>
        <taxon>Saccharomycotina</taxon>
        <taxon>Pichiomycetes</taxon>
        <taxon>Debaryomycetaceae</taxon>
        <taxon>Meyerozyma</taxon>
    </lineage>
</organism>
<keyword id="KW-0175">Coiled coil</keyword>
<keyword id="KW-1185">Reference proteome</keyword>
<proteinExistence type="evidence at transcript level"/>
<gene>
    <name type="primary">ATG6</name>
    <name type="ORF">PGUG_03206</name>
</gene>
<evidence type="ECO:0000250" key="1"/>
<evidence type="ECO:0000255" key="2"/>
<evidence type="ECO:0000256" key="3">
    <source>
        <dbReference type="SAM" id="MobiDB-lite"/>
    </source>
</evidence>
<evidence type="ECO:0000305" key="4"/>
<accession>A5DIV5</accession>
<accession>Q4A1C0</accession>
<comment type="function">
    <text evidence="1">Required for cytoplasm to vacuole transport (Cvt) and autophagy. Also involved in endosome-to-Golgi retrograde transport (By similarity).</text>
</comment>
<comment type="similarity">
    <text evidence="4">Belongs to the beclin family.</text>
</comment>
<comment type="sequence caution" evidence="4">
    <conflict type="erroneous translation">
        <sequence resource="EMBL-CDS" id="CAJ26341"/>
    </conflict>
    <text>Wrong genetic code used for translating the sequence.</text>
</comment>
<reference key="1">
    <citation type="submission" date="2005-08" db="EMBL/GenBank/DDBJ databases">
        <title>Phylogeny and biochemistry of the autophagy protein beclin 1.</title>
        <authorList>
            <person name="Botti J."/>
            <person name="Djavaheri-Mergny M."/>
            <person name="Codogno P."/>
            <person name="Oriol R."/>
        </authorList>
    </citation>
    <scope>NUCLEOTIDE SEQUENCE [MRNA]</scope>
</reference>
<reference key="2">
    <citation type="journal article" date="2009" name="Nature">
        <title>Evolution of pathogenicity and sexual reproduction in eight Candida genomes.</title>
        <authorList>
            <person name="Butler G."/>
            <person name="Rasmussen M.D."/>
            <person name="Lin M.F."/>
            <person name="Santos M.A.S."/>
            <person name="Sakthikumar S."/>
            <person name="Munro C.A."/>
            <person name="Rheinbay E."/>
            <person name="Grabherr M."/>
            <person name="Forche A."/>
            <person name="Reedy J.L."/>
            <person name="Agrafioti I."/>
            <person name="Arnaud M.B."/>
            <person name="Bates S."/>
            <person name="Brown A.J.P."/>
            <person name="Brunke S."/>
            <person name="Costanzo M.C."/>
            <person name="Fitzpatrick D.A."/>
            <person name="de Groot P.W.J."/>
            <person name="Harris D."/>
            <person name="Hoyer L.L."/>
            <person name="Hube B."/>
            <person name="Klis F.M."/>
            <person name="Kodira C."/>
            <person name="Lennard N."/>
            <person name="Logue M.E."/>
            <person name="Martin R."/>
            <person name="Neiman A.M."/>
            <person name="Nikolaou E."/>
            <person name="Quail M.A."/>
            <person name="Quinn J."/>
            <person name="Santos M.C."/>
            <person name="Schmitzberger F.F."/>
            <person name="Sherlock G."/>
            <person name="Shah P."/>
            <person name="Silverstein K.A.T."/>
            <person name="Skrzypek M.S."/>
            <person name="Soll D."/>
            <person name="Staggs R."/>
            <person name="Stansfield I."/>
            <person name="Stumpf M.P.H."/>
            <person name="Sudbery P.E."/>
            <person name="Srikantha T."/>
            <person name="Zeng Q."/>
            <person name="Berman J."/>
            <person name="Berriman M."/>
            <person name="Heitman J."/>
            <person name="Gow N.A.R."/>
            <person name="Lorenz M.C."/>
            <person name="Birren B.W."/>
            <person name="Kellis M."/>
            <person name="Cuomo C.A."/>
        </authorList>
    </citation>
    <scope>NUCLEOTIDE SEQUENCE [LARGE SCALE GENOMIC DNA]</scope>
    <source>
        <strain>ATCC 6260 / CBS 566 / DSM 6381 / JCM 1539 / NBRC 10279 / NRRL Y-324</strain>
    </source>
</reference>
<protein>
    <recommendedName>
        <fullName>Autophagy-related protein 6</fullName>
    </recommendedName>
    <alternativeName>
        <fullName>Beclin-1-like protein</fullName>
    </alternativeName>
</protein>
<dbReference type="EMBL" id="AM072826">
    <property type="protein sequence ID" value="CAJ26341.1"/>
    <property type="status" value="ALT_SEQ"/>
    <property type="molecule type" value="mRNA"/>
</dbReference>
<dbReference type="EMBL" id="CH408157">
    <property type="protein sequence ID" value="EDK39108.2"/>
    <property type="molecule type" value="Genomic_DNA"/>
</dbReference>
<dbReference type="RefSeq" id="XP_001485477.1">
    <property type="nucleotide sequence ID" value="XM_001485427.1"/>
</dbReference>
<dbReference type="SMR" id="A5DIV5"/>
<dbReference type="FunCoup" id="A5DIV5">
    <property type="interactions" value="544"/>
</dbReference>
<dbReference type="STRING" id="294746.A5DIV5"/>
<dbReference type="GeneID" id="5127116"/>
<dbReference type="KEGG" id="pgu:PGUG_03206"/>
<dbReference type="VEuPathDB" id="FungiDB:PGUG_03206"/>
<dbReference type="eggNOG" id="KOG2751">
    <property type="taxonomic scope" value="Eukaryota"/>
</dbReference>
<dbReference type="HOGENOM" id="CLU_024219_3_2_1"/>
<dbReference type="InParanoid" id="A5DIV5"/>
<dbReference type="OMA" id="EWDVYKA"/>
<dbReference type="OrthoDB" id="20368at2759"/>
<dbReference type="Proteomes" id="UP000001997">
    <property type="component" value="Unassembled WGS sequence"/>
</dbReference>
<dbReference type="GO" id="GO:0000407">
    <property type="term" value="C:phagophore assembly site"/>
    <property type="evidence" value="ECO:0007669"/>
    <property type="project" value="TreeGrafter"/>
</dbReference>
<dbReference type="GO" id="GO:0034271">
    <property type="term" value="C:phosphatidylinositol 3-kinase complex, class III, type I"/>
    <property type="evidence" value="ECO:0007669"/>
    <property type="project" value="TreeGrafter"/>
</dbReference>
<dbReference type="GO" id="GO:0034272">
    <property type="term" value="C:phosphatidylinositol 3-kinase complex, class III, type II"/>
    <property type="evidence" value="ECO:0007669"/>
    <property type="project" value="TreeGrafter"/>
</dbReference>
<dbReference type="GO" id="GO:0043548">
    <property type="term" value="F:phosphatidylinositol 3-kinase binding"/>
    <property type="evidence" value="ECO:0007669"/>
    <property type="project" value="TreeGrafter"/>
</dbReference>
<dbReference type="GO" id="GO:0030674">
    <property type="term" value="F:protein-macromolecule adaptor activity"/>
    <property type="evidence" value="ECO:0007669"/>
    <property type="project" value="TreeGrafter"/>
</dbReference>
<dbReference type="GO" id="GO:0000045">
    <property type="term" value="P:autophagosome assembly"/>
    <property type="evidence" value="ECO:0007669"/>
    <property type="project" value="TreeGrafter"/>
</dbReference>
<dbReference type="GO" id="GO:0006995">
    <property type="term" value="P:cellular response to nitrogen starvation"/>
    <property type="evidence" value="ECO:0007669"/>
    <property type="project" value="TreeGrafter"/>
</dbReference>
<dbReference type="GO" id="GO:0045324">
    <property type="term" value="P:late endosome to vacuole transport"/>
    <property type="evidence" value="ECO:0007669"/>
    <property type="project" value="TreeGrafter"/>
</dbReference>
<dbReference type="GO" id="GO:0000423">
    <property type="term" value="P:mitophagy"/>
    <property type="evidence" value="ECO:0007669"/>
    <property type="project" value="TreeGrafter"/>
</dbReference>
<dbReference type="Gene3D" id="1.10.418.40">
    <property type="entry name" value="Autophagy protein 6/Beclin 1"/>
    <property type="match status" value="1"/>
</dbReference>
<dbReference type="InterPro" id="IPR007243">
    <property type="entry name" value="Atg6/Beclin"/>
</dbReference>
<dbReference type="InterPro" id="IPR038274">
    <property type="entry name" value="Atg6/Beclin_C_sf"/>
</dbReference>
<dbReference type="InterPro" id="IPR041691">
    <property type="entry name" value="Atg6/beclin_CC"/>
</dbReference>
<dbReference type="InterPro" id="IPR040455">
    <property type="entry name" value="Atg6_BARA"/>
</dbReference>
<dbReference type="PANTHER" id="PTHR12768">
    <property type="entry name" value="BECLIN 1"/>
    <property type="match status" value="1"/>
</dbReference>
<dbReference type="PANTHER" id="PTHR12768:SF4">
    <property type="entry name" value="BECLIN-1"/>
    <property type="match status" value="1"/>
</dbReference>
<dbReference type="Pfam" id="PF04111">
    <property type="entry name" value="APG6"/>
    <property type="match status" value="1"/>
</dbReference>
<dbReference type="Pfam" id="PF17675">
    <property type="entry name" value="APG6_N"/>
    <property type="match status" value="1"/>
</dbReference>
<sequence length="461" mass="52303">MFYCSKCNAPLQIDHSLQDANTGQLNLLTQNKQSVSAAAPKLNSVDFIPKERLELLEEVEKNGHNEPIHFLDTIEEHGTDSSPDHDSSPDASLVVNGGEIEEPVPVSAPSPESSEADGPNPISGRIHTLEKIFDILSNKGEVNHPMCDECAELLIENYKLKFDQNQREKDSYMTFLKKLKLKDDSDIKESDLDTKLRDSIQECRDLAASEQEKLQELRSLEQNREELSKELQDVKMELALQQSTELSNALRLKNELHWTLQRKADQLAQEKARYRVVLNRLDHLRNLNMYTKFFDIAADDQFGKINGFRLGYKVPWSEVNCALGQVVLLAVFLCKRLDVRLQSYKLVPMGSRSQIVKLSSDHDKSKTVLNLYSSNELSLGKLFNFNKLDVSMIALLDVLSQIEATVLALDSEIELPYTISPKKDVIGGKSIRVTSNSDWTFSCKFLLVNFKWILTYASSRH</sequence>
<name>BECN1_PICGU</name>
<feature type="chain" id="PRO_0000295036" description="Autophagy-related protein 6">
    <location>
        <begin position="1"/>
        <end position="461"/>
    </location>
</feature>
<feature type="region of interest" description="Disordered" evidence="3">
    <location>
        <begin position="75"/>
        <end position="94"/>
    </location>
</feature>
<feature type="region of interest" description="Disordered" evidence="3">
    <location>
        <begin position="101"/>
        <end position="124"/>
    </location>
</feature>
<feature type="coiled-coil region" evidence="2">
    <location>
        <begin position="194"/>
        <end position="286"/>
    </location>
</feature>
<feature type="compositionally biased region" description="Basic and acidic residues" evidence="3">
    <location>
        <begin position="75"/>
        <end position="88"/>
    </location>
</feature>
<feature type="compositionally biased region" description="Low complexity" evidence="3">
    <location>
        <begin position="103"/>
        <end position="113"/>
    </location>
</feature>